<reference key="1">
    <citation type="journal article" date="2004" name="Nat. Genet.">
        <title>Complete sequencing and characterization of 21,243 full-length human cDNAs.</title>
        <authorList>
            <person name="Ota T."/>
            <person name="Suzuki Y."/>
            <person name="Nishikawa T."/>
            <person name="Otsuki T."/>
            <person name="Sugiyama T."/>
            <person name="Irie R."/>
            <person name="Wakamatsu A."/>
            <person name="Hayashi K."/>
            <person name="Sato H."/>
            <person name="Nagai K."/>
            <person name="Kimura K."/>
            <person name="Makita H."/>
            <person name="Sekine M."/>
            <person name="Obayashi M."/>
            <person name="Nishi T."/>
            <person name="Shibahara T."/>
            <person name="Tanaka T."/>
            <person name="Ishii S."/>
            <person name="Yamamoto J."/>
            <person name="Saito K."/>
            <person name="Kawai Y."/>
            <person name="Isono Y."/>
            <person name="Nakamura Y."/>
            <person name="Nagahari K."/>
            <person name="Murakami K."/>
            <person name="Yasuda T."/>
            <person name="Iwayanagi T."/>
            <person name="Wagatsuma M."/>
            <person name="Shiratori A."/>
            <person name="Sudo H."/>
            <person name="Hosoiri T."/>
            <person name="Kaku Y."/>
            <person name="Kodaira H."/>
            <person name="Kondo H."/>
            <person name="Sugawara M."/>
            <person name="Takahashi M."/>
            <person name="Kanda K."/>
            <person name="Yokoi T."/>
            <person name="Furuya T."/>
            <person name="Kikkawa E."/>
            <person name="Omura Y."/>
            <person name="Abe K."/>
            <person name="Kamihara K."/>
            <person name="Katsuta N."/>
            <person name="Sato K."/>
            <person name="Tanikawa M."/>
            <person name="Yamazaki M."/>
            <person name="Ninomiya K."/>
            <person name="Ishibashi T."/>
            <person name="Yamashita H."/>
            <person name="Murakawa K."/>
            <person name="Fujimori K."/>
            <person name="Tanai H."/>
            <person name="Kimata M."/>
            <person name="Watanabe M."/>
            <person name="Hiraoka S."/>
            <person name="Chiba Y."/>
            <person name="Ishida S."/>
            <person name="Ono Y."/>
            <person name="Takiguchi S."/>
            <person name="Watanabe S."/>
            <person name="Yosida M."/>
            <person name="Hotuta T."/>
            <person name="Kusano J."/>
            <person name="Kanehori K."/>
            <person name="Takahashi-Fujii A."/>
            <person name="Hara H."/>
            <person name="Tanase T.-O."/>
            <person name="Nomura Y."/>
            <person name="Togiya S."/>
            <person name="Komai F."/>
            <person name="Hara R."/>
            <person name="Takeuchi K."/>
            <person name="Arita M."/>
            <person name="Imose N."/>
            <person name="Musashino K."/>
            <person name="Yuuki H."/>
            <person name="Oshima A."/>
            <person name="Sasaki N."/>
            <person name="Aotsuka S."/>
            <person name="Yoshikawa Y."/>
            <person name="Matsunawa H."/>
            <person name="Ichihara T."/>
            <person name="Shiohata N."/>
            <person name="Sano S."/>
            <person name="Moriya S."/>
            <person name="Momiyama H."/>
            <person name="Satoh N."/>
            <person name="Takami S."/>
            <person name="Terashima Y."/>
            <person name="Suzuki O."/>
            <person name="Nakagawa S."/>
            <person name="Senoh A."/>
            <person name="Mizoguchi H."/>
            <person name="Goto Y."/>
            <person name="Shimizu F."/>
            <person name="Wakebe H."/>
            <person name="Hishigaki H."/>
            <person name="Watanabe T."/>
            <person name="Sugiyama A."/>
            <person name="Takemoto M."/>
            <person name="Kawakami B."/>
            <person name="Yamazaki M."/>
            <person name="Watanabe K."/>
            <person name="Kumagai A."/>
            <person name="Itakura S."/>
            <person name="Fukuzumi Y."/>
            <person name="Fujimori Y."/>
            <person name="Komiyama M."/>
            <person name="Tashiro H."/>
            <person name="Tanigami A."/>
            <person name="Fujiwara T."/>
            <person name="Ono T."/>
            <person name="Yamada K."/>
            <person name="Fujii Y."/>
            <person name="Ozaki K."/>
            <person name="Hirao M."/>
            <person name="Ohmori Y."/>
            <person name="Kawabata A."/>
            <person name="Hikiji T."/>
            <person name="Kobatake N."/>
            <person name="Inagaki H."/>
            <person name="Ikema Y."/>
            <person name="Okamoto S."/>
            <person name="Okitani R."/>
            <person name="Kawakami T."/>
            <person name="Noguchi S."/>
            <person name="Itoh T."/>
            <person name="Shigeta K."/>
            <person name="Senba T."/>
            <person name="Matsumura K."/>
            <person name="Nakajima Y."/>
            <person name="Mizuno T."/>
            <person name="Morinaga M."/>
            <person name="Sasaki M."/>
            <person name="Togashi T."/>
            <person name="Oyama M."/>
            <person name="Hata H."/>
            <person name="Watanabe M."/>
            <person name="Komatsu T."/>
            <person name="Mizushima-Sugano J."/>
            <person name="Satoh T."/>
            <person name="Shirai Y."/>
            <person name="Takahashi Y."/>
            <person name="Nakagawa K."/>
            <person name="Okumura K."/>
            <person name="Nagase T."/>
            <person name="Nomura N."/>
            <person name="Kikuchi H."/>
            <person name="Masuho Y."/>
            <person name="Yamashita R."/>
            <person name="Nakai K."/>
            <person name="Yada T."/>
            <person name="Nakamura Y."/>
            <person name="Ohara O."/>
            <person name="Isogai T."/>
            <person name="Sugano S."/>
        </authorList>
    </citation>
    <scope>NUCLEOTIDE SEQUENCE [LARGE SCALE MRNA] (ISOFORMS 1 AND 2)</scope>
    <source>
        <tissue>Testis</tissue>
    </source>
</reference>
<reference key="2">
    <citation type="journal article" date="2004" name="Nature">
        <title>The DNA sequence and comparative analysis of human chromosome 5.</title>
        <authorList>
            <person name="Schmutz J."/>
            <person name="Martin J."/>
            <person name="Terry A."/>
            <person name="Couronne O."/>
            <person name="Grimwood J."/>
            <person name="Lowry S."/>
            <person name="Gordon L.A."/>
            <person name="Scott D."/>
            <person name="Xie G."/>
            <person name="Huang W."/>
            <person name="Hellsten U."/>
            <person name="Tran-Gyamfi M."/>
            <person name="She X."/>
            <person name="Prabhakar S."/>
            <person name="Aerts A."/>
            <person name="Altherr M."/>
            <person name="Bajorek E."/>
            <person name="Black S."/>
            <person name="Branscomb E."/>
            <person name="Caoile C."/>
            <person name="Challacombe J.F."/>
            <person name="Chan Y.M."/>
            <person name="Denys M."/>
            <person name="Detter J.C."/>
            <person name="Escobar J."/>
            <person name="Flowers D."/>
            <person name="Fotopulos D."/>
            <person name="Glavina T."/>
            <person name="Gomez M."/>
            <person name="Gonzales E."/>
            <person name="Goodstein D."/>
            <person name="Grigoriev I."/>
            <person name="Groza M."/>
            <person name="Hammon N."/>
            <person name="Hawkins T."/>
            <person name="Haydu L."/>
            <person name="Israni S."/>
            <person name="Jett J."/>
            <person name="Kadner K."/>
            <person name="Kimball H."/>
            <person name="Kobayashi A."/>
            <person name="Lopez F."/>
            <person name="Lou Y."/>
            <person name="Martinez D."/>
            <person name="Medina C."/>
            <person name="Morgan J."/>
            <person name="Nandkeshwar R."/>
            <person name="Noonan J.P."/>
            <person name="Pitluck S."/>
            <person name="Pollard M."/>
            <person name="Predki P."/>
            <person name="Priest J."/>
            <person name="Ramirez L."/>
            <person name="Retterer J."/>
            <person name="Rodriguez A."/>
            <person name="Rogers S."/>
            <person name="Salamov A."/>
            <person name="Salazar A."/>
            <person name="Thayer N."/>
            <person name="Tice H."/>
            <person name="Tsai M."/>
            <person name="Ustaszewska A."/>
            <person name="Vo N."/>
            <person name="Wheeler J."/>
            <person name="Wu K."/>
            <person name="Yang J."/>
            <person name="Dickson M."/>
            <person name="Cheng J.-F."/>
            <person name="Eichler E.E."/>
            <person name="Olsen A."/>
            <person name="Pennacchio L.A."/>
            <person name="Rokhsar D.S."/>
            <person name="Richardson P."/>
            <person name="Lucas S.M."/>
            <person name="Myers R.M."/>
            <person name="Rubin E.M."/>
        </authorList>
    </citation>
    <scope>NUCLEOTIDE SEQUENCE [LARGE SCALE GENOMIC DNA]</scope>
</reference>
<reference key="3">
    <citation type="submission" date="2005-07" db="EMBL/GenBank/DDBJ databases">
        <authorList>
            <person name="Mural R.J."/>
            <person name="Istrail S."/>
            <person name="Sutton G.G."/>
            <person name="Florea L."/>
            <person name="Halpern A.L."/>
            <person name="Mobarry C.M."/>
            <person name="Lippert R."/>
            <person name="Walenz B."/>
            <person name="Shatkay H."/>
            <person name="Dew I."/>
            <person name="Miller J.R."/>
            <person name="Flanigan M.J."/>
            <person name="Edwards N.J."/>
            <person name="Bolanos R."/>
            <person name="Fasulo D."/>
            <person name="Halldorsson B.V."/>
            <person name="Hannenhalli S."/>
            <person name="Turner R."/>
            <person name="Yooseph S."/>
            <person name="Lu F."/>
            <person name="Nusskern D.R."/>
            <person name="Shue B.C."/>
            <person name="Zheng X.H."/>
            <person name="Zhong F."/>
            <person name="Delcher A.L."/>
            <person name="Huson D.H."/>
            <person name="Kravitz S.A."/>
            <person name="Mouchard L."/>
            <person name="Reinert K."/>
            <person name="Remington K.A."/>
            <person name="Clark A.G."/>
            <person name="Waterman M.S."/>
            <person name="Eichler E.E."/>
            <person name="Adams M.D."/>
            <person name="Hunkapiller M.W."/>
            <person name="Myers E.W."/>
            <person name="Venter J.C."/>
        </authorList>
    </citation>
    <scope>NUCLEOTIDE SEQUENCE [LARGE SCALE GENOMIC DNA]</scope>
</reference>
<reference key="4">
    <citation type="journal article" date="2004" name="Genome Res.">
        <title>The status, quality, and expansion of the NIH full-length cDNA project: the Mammalian Gene Collection (MGC).</title>
        <authorList>
            <consortium name="The MGC Project Team"/>
        </authorList>
    </citation>
    <scope>NUCLEOTIDE SEQUENCE [LARGE SCALE MRNA] OF 76-589 (ISOFORM 2)</scope>
    <source>
        <tissue>Uterus</tissue>
    </source>
</reference>
<reference key="5">
    <citation type="journal article" date="1995" name="Genomics">
        <title>Isolation and fine mapping of 16 novel human zinc finger-encoding cDNAs identify putative candidate genes for developmental and malignant disorders.</title>
        <authorList>
            <person name="Tommerup N."/>
            <person name="Vissing H."/>
        </authorList>
    </citation>
    <scope>NUCLEOTIDE SEQUENCE [MRNA] OF 148-623 (ISOFORM 1)</scope>
    <source>
        <tissue>Insulinoma</tissue>
    </source>
</reference>
<reference key="6">
    <citation type="journal article" date="2002" name="Biochem. Biophys. Res. Commun.">
        <title>The murine BTB/POZ zinc finger gene Znf131: predominant expression in the developing central nervous system, in adult brain, testis, and thymus.</title>
        <authorList>
            <person name="Trappe R."/>
            <person name="Buddenberg P."/>
            <person name="Uedelhoven J."/>
            <person name="Glaser B."/>
            <person name="Buck A."/>
            <person name="Engel W."/>
            <person name="Burfeind P."/>
        </authorList>
    </citation>
    <scope>TISSUE SPECIFICITY</scope>
</reference>
<reference key="7">
    <citation type="journal article" date="2007" name="Biochim. Biophys. Acta">
        <title>Nuclear trafficking of the POZ-ZF protein Znf131.</title>
        <authorList>
            <person name="Donaldson N.S."/>
            <person name="Daniel Y."/>
            <person name="Kelly K.F."/>
            <person name="Graham M."/>
            <person name="Daniel J.M."/>
        </authorList>
    </citation>
    <scope>NUCLEAR LOCALIZATION SIGNALS</scope>
    <scope>SUBCELLULAR LOCATION</scope>
</reference>
<reference key="8">
    <citation type="journal article" date="2008" name="BMC Genomics">
        <title>High-throughput cell-based screening reveals a role for ZNF131 as a repressor of ERalpha signaling.</title>
        <authorList>
            <person name="Han X."/>
            <person name="Guo J."/>
            <person name="Deng W."/>
            <person name="Zhang C."/>
            <person name="Du P."/>
            <person name="Shi T."/>
            <person name="Ma D."/>
        </authorList>
    </citation>
    <scope>FUNCTION</scope>
</reference>
<reference key="9">
    <citation type="journal article" date="2012" name="J. Biol. Chem.">
        <title>Small ubiquitin-like modifier (SUMO) modification of zinc finger protein 131 potentiates its negative effect on estrogen signaling.</title>
        <authorList>
            <person name="Oh Y."/>
            <person name="Chung K.C."/>
        </authorList>
    </citation>
    <scope>FUNCTION</scope>
    <scope>UBIQUITINATION</scope>
    <scope>SUMOYLATION AT LYS-601</scope>
    <scope>SUBCELLULAR LOCATION</scope>
    <scope>MUTAGENESIS OF LYS-242; LYS-281; LYS-289; LYS-477; LYS-601 AND LYS-610</scope>
</reference>
<reference key="10">
    <citation type="journal article" date="2013" name="J. Biol. Chem.">
        <title>UHRF2, a ubiquitin E3 ligase, acts as a small ubiquitin-like modifier E3 ligase for zinc finger protein 131.</title>
        <authorList>
            <person name="Oh Y."/>
            <person name="Chung K.C."/>
        </authorList>
    </citation>
    <scope>UBIQUITINATION</scope>
    <scope>SUMOYLATION AT LYS-601</scope>
    <scope>SUBCELLULAR LOCATION</scope>
</reference>
<reference key="11">
    <citation type="journal article" date="2013" name="J. Proteome Res.">
        <title>Toward a comprehensive characterization of a human cancer cell phosphoproteome.</title>
        <authorList>
            <person name="Zhou H."/>
            <person name="Di Palma S."/>
            <person name="Preisinger C."/>
            <person name="Peng M."/>
            <person name="Polat A.N."/>
            <person name="Heck A.J."/>
            <person name="Mohammed S."/>
        </authorList>
    </citation>
    <scope>IDENTIFICATION BY MASS SPECTROMETRY [LARGE SCALE ANALYSIS]</scope>
    <source>
        <tissue>Erythroleukemia</tissue>
    </source>
</reference>
<reference key="12">
    <citation type="journal article" date="2017" name="Nat. Struct. Mol. Biol.">
        <title>Site-specific mapping of the human SUMO proteome reveals co-modification with phosphorylation.</title>
        <authorList>
            <person name="Hendriks I.A."/>
            <person name="Lyon D."/>
            <person name="Young C."/>
            <person name="Jensen L.J."/>
            <person name="Vertegaal A.C."/>
            <person name="Nielsen M.L."/>
        </authorList>
    </citation>
    <scope>SUMOYLATION [LARGE SCALE ANALYSIS] AT LYS-289 AND LYS-295</scope>
    <scope>IDENTIFICATION BY MASS SPECTROMETRY [LARGE SCALE ANALYSIS]</scope>
</reference>
<accession>P52739</accession>
<accession>B4DRL3</accession>
<accession>Q6PIF0</accession>
<comment type="function">
    <text evidence="1 7 8">Plays a role during development and organogenesis as well as in the function of the adult central nervous system (By similarity). May be involved in transcriptional regulation as a repressor of ESR1/ER-alpha signaling.</text>
</comment>
<comment type="interaction">
    <interactant intactId="EBI-2849346">
        <id>P52739</id>
    </interactant>
    <interactant intactId="EBI-701903">
        <id>Q14192</id>
        <label>FHL2</label>
    </interactant>
    <organismsDiffer>false</organismsDiffer>
    <experiments>3</experiments>
</comment>
<comment type="interaction">
    <interactant intactId="EBI-10213055">
        <id>P52739-2</id>
    </interactant>
    <interactant intactId="EBI-701903">
        <id>Q14192</id>
        <label>FHL2</label>
    </interactant>
    <organismsDiffer>false</organismsDiffer>
    <experiments>6</experiments>
</comment>
<comment type="interaction">
    <interactant intactId="EBI-10213055">
        <id>P52739-2</id>
    </interactant>
    <interactant intactId="EBI-750641">
        <id>Q5TD97</id>
        <label>FHL5</label>
    </interactant>
    <organismsDiffer>false</organismsDiffer>
    <experiments>4</experiments>
</comment>
<comment type="interaction">
    <interactant intactId="EBI-10213055">
        <id>P52739-2</id>
    </interactant>
    <interactant intactId="EBI-10269566">
        <id>Q8NDC4</id>
        <label>MORN4</label>
    </interactant>
    <organismsDiffer>false</organismsDiffer>
    <experiments>3</experiments>
</comment>
<comment type="interaction">
    <interactant intactId="EBI-10213055">
        <id>P52739-2</id>
    </interactant>
    <interactant intactId="EBI-11532361">
        <id>P78356-2</id>
        <label>PIP4K2B</label>
    </interactant>
    <organismsDiffer>false</organismsDiffer>
    <experiments>3</experiments>
</comment>
<comment type="interaction">
    <interactant intactId="EBI-10213055">
        <id>P52739-2</id>
    </interactant>
    <interactant intactId="EBI-12157263">
        <id>P40337-2</id>
        <label>VHL</label>
    </interactant>
    <organismsDiffer>false</organismsDiffer>
    <experiments>3</experiments>
</comment>
<comment type="subcellular location">
    <subcellularLocation>
        <location evidence="6 8 9">Nucleus</location>
    </subcellularLocation>
    <text>Sumoylation does not affect nuclear localization.</text>
</comment>
<comment type="alternative products">
    <event type="alternative splicing"/>
    <isoform>
        <id>P52739-1</id>
        <name>1</name>
        <sequence type="displayed"/>
    </isoform>
    <isoform>
        <id>P52739-2</id>
        <name>2</name>
        <sequence type="described" ref="VSP_016923"/>
    </isoform>
</comment>
<comment type="tissue specificity">
    <text evidence="5">Predominant expression is found in different brain areas such as the occipital and temporal lobe, the nucleus caudatus, hippocampus, and the cerebellum as well as in testis and thymus.</text>
</comment>
<comment type="PTM">
    <text evidence="8 9">Monosumoylated at Lys-601 by CBX4 and UHRF2. Sumoylation may potentiate ZNF131 inhibition of estrogen signaling. Sumoylation does not interfere with ubiquitination.</text>
</comment>
<comment type="PTM">
    <text>Ubiquitinated.</text>
</comment>
<comment type="similarity">
    <text evidence="12">Belongs to the krueppel C2H2-type zinc-finger protein family.</text>
</comment>
<evidence type="ECO:0000250" key="1"/>
<evidence type="ECO:0000255" key="2">
    <source>
        <dbReference type="PROSITE-ProRule" id="PRU00037"/>
    </source>
</evidence>
<evidence type="ECO:0000255" key="3">
    <source>
        <dbReference type="PROSITE-ProRule" id="PRU00042"/>
    </source>
</evidence>
<evidence type="ECO:0000256" key="4">
    <source>
        <dbReference type="SAM" id="MobiDB-lite"/>
    </source>
</evidence>
<evidence type="ECO:0000269" key="5">
    <source>
    </source>
</evidence>
<evidence type="ECO:0000269" key="6">
    <source>
    </source>
</evidence>
<evidence type="ECO:0000269" key="7">
    <source>
    </source>
</evidence>
<evidence type="ECO:0000269" key="8">
    <source>
    </source>
</evidence>
<evidence type="ECO:0000269" key="9">
    <source>
    </source>
</evidence>
<evidence type="ECO:0000303" key="10">
    <source>
    </source>
</evidence>
<evidence type="ECO:0000303" key="11">
    <source>
    </source>
</evidence>
<evidence type="ECO:0000305" key="12"/>
<evidence type="ECO:0007744" key="13">
    <source>
    </source>
</evidence>
<protein>
    <recommendedName>
        <fullName>Zinc finger protein 131</fullName>
    </recommendedName>
</protein>
<dbReference type="EMBL" id="AK057343">
    <property type="status" value="NOT_ANNOTATED_CDS"/>
    <property type="molecule type" value="mRNA"/>
</dbReference>
<dbReference type="EMBL" id="AK299315">
    <property type="protein sequence ID" value="BAG61325.1"/>
    <property type="molecule type" value="mRNA"/>
</dbReference>
<dbReference type="EMBL" id="AC106800">
    <property type="status" value="NOT_ANNOTATED_CDS"/>
    <property type="molecule type" value="Genomic_DNA"/>
</dbReference>
<dbReference type="EMBL" id="CH471119">
    <property type="protein sequence ID" value="EAW56046.1"/>
    <property type="molecule type" value="Genomic_DNA"/>
</dbReference>
<dbReference type="EMBL" id="BC035875">
    <property type="protein sequence ID" value="AAH35875.1"/>
    <property type="molecule type" value="mRNA"/>
</dbReference>
<dbReference type="EMBL" id="U09410">
    <property type="protein sequence ID" value="AAC50251.1"/>
    <property type="molecule type" value="mRNA"/>
</dbReference>
<dbReference type="CCDS" id="CCDS43313.1">
    <molecule id="P52739-2"/>
</dbReference>
<dbReference type="CCDS" id="CCDS78005.1">
    <molecule id="P52739-1"/>
</dbReference>
<dbReference type="PIR" id="I38597">
    <property type="entry name" value="I38597"/>
</dbReference>
<dbReference type="RefSeq" id="NP_001284477.1">
    <molecule id="P52739-1"/>
    <property type="nucleotide sequence ID" value="NM_001297548.3"/>
</dbReference>
<dbReference type="RefSeq" id="NP_001317635.1">
    <molecule id="P52739-2"/>
    <property type="nucleotide sequence ID" value="NM_001330706.2"/>
</dbReference>
<dbReference type="RefSeq" id="NP_001317636.1">
    <molecule id="P52739-1"/>
    <property type="nucleotide sequence ID" value="NM_001330707.2"/>
</dbReference>
<dbReference type="RefSeq" id="NP_001317637.1">
    <molecule id="P52739-1"/>
    <property type="nucleotide sequence ID" value="NM_001330708.2"/>
</dbReference>
<dbReference type="RefSeq" id="NP_001317640.1">
    <molecule id="P52739-2"/>
    <property type="nucleotide sequence ID" value="NM_001330711.2"/>
</dbReference>
<dbReference type="RefSeq" id="NP_001317641.1">
    <molecule id="P52739-1"/>
    <property type="nucleotide sequence ID" value="NM_001330712.2"/>
</dbReference>
<dbReference type="RefSeq" id="NP_001317642.1">
    <molecule id="P52739-2"/>
    <property type="nucleotide sequence ID" value="NM_001330713.2"/>
</dbReference>
<dbReference type="RefSeq" id="NP_001317643.1">
    <molecule id="P52739-1"/>
    <property type="nucleotide sequence ID" value="NM_001330714.2"/>
</dbReference>
<dbReference type="RefSeq" id="NP_001317644.1">
    <molecule id="P52739-2"/>
    <property type="nucleotide sequence ID" value="NM_001330715.2"/>
</dbReference>
<dbReference type="RefSeq" id="NP_001317646.1">
    <property type="nucleotide sequence ID" value="NM_001330717.1"/>
</dbReference>
<dbReference type="RefSeq" id="NP_001375248.1">
    <molecule id="P52739-2"/>
    <property type="nucleotide sequence ID" value="NM_001388319.1"/>
</dbReference>
<dbReference type="RefSeq" id="NP_003423.1">
    <molecule id="P52739-2"/>
    <property type="nucleotide sequence ID" value="NM_003432.4"/>
</dbReference>
<dbReference type="RefSeq" id="XP_005248420.1">
    <property type="nucleotide sequence ID" value="XM_005248363.4"/>
</dbReference>
<dbReference type="RefSeq" id="XP_016865319.1">
    <property type="nucleotide sequence ID" value="XM_017009830.1"/>
</dbReference>
<dbReference type="RefSeq" id="XP_016865323.1">
    <property type="nucleotide sequence ID" value="XM_017009834.1"/>
</dbReference>
<dbReference type="RefSeq" id="XP_016865327.1">
    <property type="nucleotide sequence ID" value="XM_017009838.1"/>
</dbReference>
<dbReference type="SMR" id="P52739"/>
<dbReference type="BioGRID" id="113485">
    <property type="interactions" value="129"/>
</dbReference>
<dbReference type="FunCoup" id="P52739">
    <property type="interactions" value="2852"/>
</dbReference>
<dbReference type="IntAct" id="P52739">
    <property type="interactions" value="43"/>
</dbReference>
<dbReference type="MINT" id="P52739"/>
<dbReference type="STRING" id="9606.ENSP00000426504"/>
<dbReference type="ChEMBL" id="CHEMBL5069380"/>
<dbReference type="GlyGen" id="P52739">
    <property type="glycosylation" value="1 site, 1 O-linked glycan (1 site)"/>
</dbReference>
<dbReference type="iPTMnet" id="P52739"/>
<dbReference type="PhosphoSitePlus" id="P52739"/>
<dbReference type="BioMuta" id="ZNF131"/>
<dbReference type="DMDM" id="85681857"/>
<dbReference type="jPOST" id="P52739"/>
<dbReference type="MassIVE" id="P52739"/>
<dbReference type="PaxDb" id="9606-ENSP00000421246"/>
<dbReference type="PeptideAtlas" id="P52739"/>
<dbReference type="ProteomicsDB" id="56512">
    <molecule id="P52739-1"/>
</dbReference>
<dbReference type="ProteomicsDB" id="56513">
    <molecule id="P52739-2"/>
</dbReference>
<dbReference type="Pumba" id="P52739"/>
<dbReference type="Antibodypedia" id="23236">
    <property type="antibodies" value="274 antibodies from 23 providers"/>
</dbReference>
<dbReference type="DNASU" id="7690"/>
<dbReference type="Ensembl" id="ENST00000306938.8">
    <molecule id="P52739-2"/>
    <property type="protein sequence ID" value="ENSP00000305804.4"/>
    <property type="gene ID" value="ENSG00000172262.12"/>
</dbReference>
<dbReference type="Ensembl" id="ENST00000505606.6">
    <molecule id="P52739-2"/>
    <property type="protein sequence ID" value="ENSP00000423945.1"/>
    <property type="gene ID" value="ENSG00000172262.12"/>
</dbReference>
<dbReference type="Ensembl" id="ENST00000509156.5">
    <molecule id="P52739-1"/>
    <property type="protein sequence ID" value="ENSP00000426504.1"/>
    <property type="gene ID" value="ENSG00000172262.12"/>
</dbReference>
<dbReference type="Ensembl" id="ENST00000509634.5">
    <molecule id="P52739-2"/>
    <property type="protein sequence ID" value="ENSP00000421246.1"/>
    <property type="gene ID" value="ENSG00000172262.12"/>
</dbReference>
<dbReference type="Ensembl" id="ENST00000682664.1">
    <molecule id="P52739-1"/>
    <property type="protein sequence ID" value="ENSP00000507111.1"/>
    <property type="gene ID" value="ENSG00000172262.12"/>
</dbReference>
<dbReference type="GeneID" id="7690"/>
<dbReference type="KEGG" id="hsa:7690"/>
<dbReference type="MANE-Select" id="ENST00000682664.1">
    <property type="protein sequence ID" value="ENSP00000507111.1"/>
    <property type="RefSeq nucleotide sequence ID" value="NM_001330707.2"/>
    <property type="RefSeq protein sequence ID" value="NP_001317636.1"/>
</dbReference>
<dbReference type="UCSC" id="uc003jnk.4">
    <molecule id="P52739-1"/>
    <property type="organism name" value="human"/>
</dbReference>
<dbReference type="AGR" id="HGNC:12915"/>
<dbReference type="CTD" id="7690"/>
<dbReference type="DisGeNET" id="7690"/>
<dbReference type="GeneCards" id="ZNF131"/>
<dbReference type="HGNC" id="HGNC:12915">
    <property type="gene designation" value="ZNF131"/>
</dbReference>
<dbReference type="HPA" id="ENSG00000172262">
    <property type="expression patterns" value="Low tissue specificity"/>
</dbReference>
<dbReference type="MIM" id="604073">
    <property type="type" value="gene"/>
</dbReference>
<dbReference type="neXtProt" id="NX_P52739"/>
<dbReference type="OpenTargets" id="ENSG00000172262"/>
<dbReference type="PharmGKB" id="PA37504"/>
<dbReference type="VEuPathDB" id="HostDB:ENSG00000172262"/>
<dbReference type="eggNOG" id="KOG1721">
    <property type="taxonomic scope" value="Eukaryota"/>
</dbReference>
<dbReference type="GeneTree" id="ENSGT00940000154668"/>
<dbReference type="HOGENOM" id="CLU_031851_0_0_1"/>
<dbReference type="InParanoid" id="P52739"/>
<dbReference type="OMA" id="NQMQMEV"/>
<dbReference type="OrthoDB" id="624345at2759"/>
<dbReference type="PAN-GO" id="P52739">
    <property type="GO annotations" value="4 GO annotations based on evolutionary models"/>
</dbReference>
<dbReference type="PhylomeDB" id="P52739"/>
<dbReference type="TreeFam" id="TF331428"/>
<dbReference type="PathwayCommons" id="P52739"/>
<dbReference type="Reactome" id="R-HSA-3899300">
    <property type="pathway name" value="SUMOylation of transcription cofactors"/>
</dbReference>
<dbReference type="SignaLink" id="P52739"/>
<dbReference type="BioGRID-ORCS" id="7690">
    <property type="hits" value="724 hits in 1229 CRISPR screens"/>
</dbReference>
<dbReference type="CD-CODE" id="804901D1">
    <property type="entry name" value="Nuclear speckle"/>
</dbReference>
<dbReference type="ChiTaRS" id="ZNF131">
    <property type="organism name" value="human"/>
</dbReference>
<dbReference type="GenomeRNAi" id="7690"/>
<dbReference type="Pharos" id="P52739">
    <property type="development level" value="Tbio"/>
</dbReference>
<dbReference type="PRO" id="PR:P52739"/>
<dbReference type="Proteomes" id="UP000005640">
    <property type="component" value="Chromosome 5"/>
</dbReference>
<dbReference type="RNAct" id="P52739">
    <property type="molecule type" value="protein"/>
</dbReference>
<dbReference type="Bgee" id="ENSG00000172262">
    <property type="expression patterns" value="Expressed in secondary oocyte and 201 other cell types or tissues"/>
</dbReference>
<dbReference type="ExpressionAtlas" id="P52739">
    <property type="expression patterns" value="baseline and differential"/>
</dbReference>
<dbReference type="GO" id="GO:0045111">
    <property type="term" value="C:intermediate filament cytoskeleton"/>
    <property type="evidence" value="ECO:0000314"/>
    <property type="project" value="HPA"/>
</dbReference>
<dbReference type="GO" id="GO:0005654">
    <property type="term" value="C:nucleoplasm"/>
    <property type="evidence" value="ECO:0000314"/>
    <property type="project" value="HPA"/>
</dbReference>
<dbReference type="GO" id="GO:0001228">
    <property type="term" value="F:DNA-binding transcription activator activity, RNA polymerase II-specific"/>
    <property type="evidence" value="ECO:0007669"/>
    <property type="project" value="Ensembl"/>
</dbReference>
<dbReference type="GO" id="GO:0001227">
    <property type="term" value="F:DNA-binding transcription repressor activity, RNA polymerase II-specific"/>
    <property type="evidence" value="ECO:0000318"/>
    <property type="project" value="GO_Central"/>
</dbReference>
<dbReference type="GO" id="GO:0000978">
    <property type="term" value="F:RNA polymerase II cis-regulatory region sequence-specific DNA binding"/>
    <property type="evidence" value="ECO:0000318"/>
    <property type="project" value="GO_Central"/>
</dbReference>
<dbReference type="GO" id="GO:0008270">
    <property type="term" value="F:zinc ion binding"/>
    <property type="evidence" value="ECO:0007669"/>
    <property type="project" value="UniProtKB-KW"/>
</dbReference>
<dbReference type="GO" id="GO:0000122">
    <property type="term" value="P:negative regulation of transcription by RNA polymerase II"/>
    <property type="evidence" value="ECO:0000318"/>
    <property type="project" value="GO_Central"/>
</dbReference>
<dbReference type="GO" id="GO:0001817">
    <property type="term" value="P:regulation of cytokine production"/>
    <property type="evidence" value="ECO:0000318"/>
    <property type="project" value="GO_Central"/>
</dbReference>
<dbReference type="GO" id="GO:0002682">
    <property type="term" value="P:regulation of immune system process"/>
    <property type="evidence" value="ECO:0000318"/>
    <property type="project" value="GO_Central"/>
</dbReference>
<dbReference type="CDD" id="cd18221">
    <property type="entry name" value="BTB_POZ_ZBTB35_ZNF131"/>
    <property type="match status" value="1"/>
</dbReference>
<dbReference type="FunFam" id="3.30.160.60:FF:000498">
    <property type="entry name" value="Putative zinc finger protein 131"/>
    <property type="match status" value="1"/>
</dbReference>
<dbReference type="FunFam" id="3.30.160.60:FF:000539">
    <property type="entry name" value="Putative zinc finger protein 131"/>
    <property type="match status" value="1"/>
</dbReference>
<dbReference type="FunFam" id="3.30.160.60:FF:000552">
    <property type="entry name" value="Zinc finger protein 131"/>
    <property type="match status" value="1"/>
</dbReference>
<dbReference type="FunFam" id="3.30.710.10:FF:000041">
    <property type="entry name" value="Zinc finger protein 131"/>
    <property type="match status" value="1"/>
</dbReference>
<dbReference type="FunFam" id="3.30.160.60:FF:001444">
    <property type="entry name" value="zinc finger protein 131 isoform X1"/>
    <property type="match status" value="1"/>
</dbReference>
<dbReference type="Gene3D" id="3.30.160.60">
    <property type="entry name" value="Classic Zinc Finger"/>
    <property type="match status" value="4"/>
</dbReference>
<dbReference type="Gene3D" id="3.30.710.10">
    <property type="entry name" value="Potassium Channel Kv1.1, Chain A"/>
    <property type="match status" value="1"/>
</dbReference>
<dbReference type="InterPro" id="IPR000210">
    <property type="entry name" value="BTB/POZ_dom"/>
</dbReference>
<dbReference type="InterPro" id="IPR011333">
    <property type="entry name" value="SKP1/BTB/POZ_sf"/>
</dbReference>
<dbReference type="InterPro" id="IPR036236">
    <property type="entry name" value="Znf_C2H2_sf"/>
</dbReference>
<dbReference type="InterPro" id="IPR013087">
    <property type="entry name" value="Znf_C2H2_type"/>
</dbReference>
<dbReference type="PANTHER" id="PTHR24394">
    <property type="entry name" value="ZINC FINGER PROTEIN"/>
    <property type="match status" value="1"/>
</dbReference>
<dbReference type="PANTHER" id="PTHR24394:SF55">
    <property type="entry name" value="ZINC FINGER PROTEIN 131"/>
    <property type="match status" value="1"/>
</dbReference>
<dbReference type="Pfam" id="PF00651">
    <property type="entry name" value="BTB"/>
    <property type="match status" value="1"/>
</dbReference>
<dbReference type="Pfam" id="PF12874">
    <property type="entry name" value="zf-met"/>
    <property type="match status" value="2"/>
</dbReference>
<dbReference type="SMART" id="SM00225">
    <property type="entry name" value="BTB"/>
    <property type="match status" value="1"/>
</dbReference>
<dbReference type="SMART" id="SM00355">
    <property type="entry name" value="ZnF_C2H2"/>
    <property type="match status" value="6"/>
</dbReference>
<dbReference type="SUPFAM" id="SSF57667">
    <property type="entry name" value="beta-beta-alpha zinc fingers"/>
    <property type="match status" value="3"/>
</dbReference>
<dbReference type="SUPFAM" id="SSF54695">
    <property type="entry name" value="POZ domain"/>
    <property type="match status" value="1"/>
</dbReference>
<dbReference type="PROSITE" id="PS50097">
    <property type="entry name" value="BTB"/>
    <property type="match status" value="1"/>
</dbReference>
<dbReference type="PROSITE" id="PS00028">
    <property type="entry name" value="ZINC_FINGER_C2H2_1"/>
    <property type="match status" value="5"/>
</dbReference>
<dbReference type="PROSITE" id="PS50157">
    <property type="entry name" value="ZINC_FINGER_C2H2_2"/>
    <property type="match status" value="5"/>
</dbReference>
<keyword id="KW-0025">Alternative splicing</keyword>
<keyword id="KW-0238">DNA-binding</keyword>
<keyword id="KW-1017">Isopeptide bond</keyword>
<keyword id="KW-0479">Metal-binding</keyword>
<keyword id="KW-0539">Nucleus</keyword>
<keyword id="KW-1267">Proteomics identification</keyword>
<keyword id="KW-1185">Reference proteome</keyword>
<keyword id="KW-0677">Repeat</keyword>
<keyword id="KW-0678">Repressor</keyword>
<keyword id="KW-0804">Transcription</keyword>
<keyword id="KW-0805">Transcription regulation</keyword>
<keyword id="KW-0832">Ubl conjugation</keyword>
<keyword id="KW-0862">Zinc</keyword>
<keyword id="KW-0863">Zinc-finger</keyword>
<feature type="chain" id="PRO_0000047413" description="Zinc finger protein 131">
    <location>
        <begin position="1"/>
        <end position="623"/>
    </location>
</feature>
<feature type="domain" description="BTB" evidence="2">
    <location>
        <begin position="34"/>
        <end position="98"/>
    </location>
</feature>
<feature type="zinc finger region" description="C2H2-type 1" evidence="3">
    <location>
        <begin position="261"/>
        <end position="283"/>
    </location>
</feature>
<feature type="zinc finger region" description="C2H2-type 2" evidence="3">
    <location>
        <begin position="288"/>
        <end position="311"/>
    </location>
</feature>
<feature type="zinc finger region" description="C2H2-type 3" evidence="3">
    <location>
        <begin position="328"/>
        <end position="350"/>
    </location>
</feature>
<feature type="zinc finger region" description="C2H2-type 4; degenerate" evidence="3">
    <location>
        <begin position="356"/>
        <end position="381"/>
    </location>
</feature>
<feature type="zinc finger region" description="C2H2-type 5" evidence="3">
    <location>
        <begin position="392"/>
        <end position="414"/>
    </location>
</feature>
<feature type="zinc finger region" description="C2H2-type 6" evidence="3">
    <location>
        <begin position="420"/>
        <end position="443"/>
    </location>
</feature>
<feature type="region of interest" description="Disordered" evidence="4">
    <location>
        <begin position="573"/>
        <end position="623"/>
    </location>
</feature>
<feature type="short sequence motif" description="Nuclear localization signal 1" evidence="6">
    <location>
        <begin position="137"/>
        <end position="148"/>
    </location>
</feature>
<feature type="short sequence motif" description="Nuclear localization signal 2" evidence="6">
    <location>
        <begin position="317"/>
        <end position="328"/>
    </location>
</feature>
<feature type="compositionally biased region" description="Basic and acidic residues" evidence="4">
    <location>
        <begin position="573"/>
        <end position="617"/>
    </location>
</feature>
<feature type="cross-link" description="Glycyl lysine isopeptide (Lys-Gly) (interchain with G-Cter in SUMO2)" evidence="13">
    <location>
        <position position="289"/>
    </location>
</feature>
<feature type="cross-link" description="Glycyl lysine isopeptide (Lys-Gly) (interchain with G-Cter in SUMO2)" evidence="13">
    <location>
        <position position="295"/>
    </location>
</feature>
<feature type="cross-link" description="Glycyl lysine isopeptide (Lys-Gly) (interchain with G-Cter in SUMO)">
    <location>
        <position position="601"/>
    </location>
</feature>
<feature type="splice variant" id="VSP_016923" description="In isoform 2." evidence="10 11">
    <location>
        <begin position="244"/>
        <end position="277"/>
    </location>
</feature>
<feature type="mutagenesis site" description="No effect on sumoylation; when associated with R-281 and R-289." evidence="8">
    <original>K</original>
    <variation>R</variation>
    <location>
        <position position="242"/>
    </location>
</feature>
<feature type="mutagenesis site" description="No effect on sumoylation; when associated with R-242 and R-281." evidence="8">
    <original>K</original>
    <variation>R</variation>
    <location>
        <position position="281"/>
    </location>
</feature>
<feature type="mutagenesis site" description="No effect on sumoylation; when associated with R-242 and R-281." evidence="8">
    <original>K</original>
    <variation>R</variation>
    <location>
        <position position="289"/>
    </location>
</feature>
<feature type="mutagenesis site" description="Small loss of sumoylation. Complete loss of CBX4 sumoylation; when associated with R-601 and R-610." evidence="8">
    <original>K</original>
    <variation>R</variation>
    <location>
        <position position="477"/>
    </location>
</feature>
<feature type="mutagenesis site" description="Significant loss of sumoylation. Complete loss of CBX4 sumoylation; when associated with R-477 and R-610." evidence="8">
    <original>K</original>
    <variation>R</variation>
    <location>
        <position position="601"/>
    </location>
</feature>
<feature type="mutagenesis site" description="No effect on sumoylation. Complete loss of CBX4 sumoylation; when associated with R-477 and R-601." evidence="8">
    <original>K</original>
    <variation>R</variation>
    <location>
        <position position="610"/>
    </location>
</feature>
<feature type="sequence conflict" description="In Ref. 5; AAC50251." evidence="12" ref="5">
    <original>AETS</original>
    <variation>CSKA</variation>
    <location>
        <begin position="148"/>
        <end position="151"/>
    </location>
</feature>
<feature type="sequence conflict" description="In Ref. 5; AAC50251." evidence="12" ref="5">
    <original>GT</original>
    <variation>A</variation>
    <location>
        <begin position="175"/>
        <end position="176"/>
    </location>
</feature>
<feature type="sequence conflict" description="In Ref. 1; AK057343." evidence="12" ref="1">
    <original>H</original>
    <variation>R</variation>
    <location>
        <position position="311"/>
    </location>
</feature>
<proteinExistence type="evidence at protein level"/>
<sequence length="623" mass="71422">MEAEETMECLQEFPEHHKMILDRLNEQREQDRFTDITLIVDGHHFKAHKAVLAACSKFFYKFFQEFTQEPLVEIEGVSKMAFRHLIEFTYTAKLMIQGEEEANDVWKAAEFLQMLEAIKALEVRNKENSAPLEENTTGKNEAKKRKIAETSNVITESLPSAESEPVEIEVEIAEGTIEVEDEGIETLEEVASAKQSVKYIQSTGSSDDSALALLADITSKYRQGDRKGQIKEDGCPSDPTSKQVEGIEIVELQLSHVKDLFHCEKCNRSFKLFYHFKEHMKSHSTESFKCEICNKRYLRESAWKQHLNCYHLEEGGVSKKQRTGKKIHVCQYCEKQFDHFGHFKEHLRKHTGEKPFECPNCHERFARNSTLKCHLTACQTGVGAKKGRKKLYECQVCNSVFNSWDQFKDHLVIHTGDKPNHCTLCDLWFMQGNELRRHLSDAHNISERLVTEEVLSVETRVQTEPVTSMTIIEQVGKVHVLPLLQVQVDSAQVTVEQVHPDLLQDSQVHDSHMSELPEQVQVSYLEVGRIQTEEGTEVHVEELHVERVNQMPVEVQTELLEADLDHVTPEIMNQEERESSQADAAEAAREDHEDAEDLETKPTVDSEAEKAENEDRTALPVLE</sequence>
<organism>
    <name type="scientific">Homo sapiens</name>
    <name type="common">Human</name>
    <dbReference type="NCBI Taxonomy" id="9606"/>
    <lineage>
        <taxon>Eukaryota</taxon>
        <taxon>Metazoa</taxon>
        <taxon>Chordata</taxon>
        <taxon>Craniata</taxon>
        <taxon>Vertebrata</taxon>
        <taxon>Euteleostomi</taxon>
        <taxon>Mammalia</taxon>
        <taxon>Eutheria</taxon>
        <taxon>Euarchontoglires</taxon>
        <taxon>Primates</taxon>
        <taxon>Haplorrhini</taxon>
        <taxon>Catarrhini</taxon>
        <taxon>Hominidae</taxon>
        <taxon>Homo</taxon>
    </lineage>
</organism>
<name>ZN131_HUMAN</name>
<gene>
    <name type="primary">ZNF131</name>
</gene>